<keyword id="KW-0963">Cytoplasm</keyword>
<keyword id="KW-0342">GTP-binding</keyword>
<keyword id="KW-0436">Ligase</keyword>
<keyword id="KW-0460">Magnesium</keyword>
<keyword id="KW-0479">Metal-binding</keyword>
<keyword id="KW-0547">Nucleotide-binding</keyword>
<keyword id="KW-0658">Purine biosynthesis</keyword>
<dbReference type="EC" id="6.3.4.4" evidence="1"/>
<dbReference type="EMBL" id="CP000687">
    <property type="protein sequence ID" value="ABY69647.1"/>
    <property type="molecule type" value="Genomic_DNA"/>
</dbReference>
<dbReference type="RefSeq" id="WP_005603065.1">
    <property type="nucleotide sequence ID" value="NC_010278.1"/>
</dbReference>
<dbReference type="SMR" id="B0BQ12"/>
<dbReference type="KEGG" id="apj:APJL_1091"/>
<dbReference type="HOGENOM" id="CLU_029848_0_0_6"/>
<dbReference type="UniPathway" id="UPA00075">
    <property type="reaction ID" value="UER00335"/>
</dbReference>
<dbReference type="Proteomes" id="UP000008547">
    <property type="component" value="Chromosome"/>
</dbReference>
<dbReference type="GO" id="GO:0005737">
    <property type="term" value="C:cytoplasm"/>
    <property type="evidence" value="ECO:0007669"/>
    <property type="project" value="UniProtKB-SubCell"/>
</dbReference>
<dbReference type="GO" id="GO:0004019">
    <property type="term" value="F:adenylosuccinate synthase activity"/>
    <property type="evidence" value="ECO:0007669"/>
    <property type="project" value="UniProtKB-UniRule"/>
</dbReference>
<dbReference type="GO" id="GO:0005525">
    <property type="term" value="F:GTP binding"/>
    <property type="evidence" value="ECO:0007669"/>
    <property type="project" value="UniProtKB-UniRule"/>
</dbReference>
<dbReference type="GO" id="GO:0000287">
    <property type="term" value="F:magnesium ion binding"/>
    <property type="evidence" value="ECO:0007669"/>
    <property type="project" value="UniProtKB-UniRule"/>
</dbReference>
<dbReference type="GO" id="GO:0044208">
    <property type="term" value="P:'de novo' AMP biosynthetic process"/>
    <property type="evidence" value="ECO:0007669"/>
    <property type="project" value="UniProtKB-UniRule"/>
</dbReference>
<dbReference type="GO" id="GO:0046040">
    <property type="term" value="P:IMP metabolic process"/>
    <property type="evidence" value="ECO:0007669"/>
    <property type="project" value="TreeGrafter"/>
</dbReference>
<dbReference type="CDD" id="cd03108">
    <property type="entry name" value="AdSS"/>
    <property type="match status" value="1"/>
</dbReference>
<dbReference type="FunFam" id="1.10.300.10:FF:000001">
    <property type="entry name" value="Adenylosuccinate synthetase"/>
    <property type="match status" value="1"/>
</dbReference>
<dbReference type="FunFam" id="3.90.170.10:FF:000001">
    <property type="entry name" value="Adenylosuccinate synthetase"/>
    <property type="match status" value="1"/>
</dbReference>
<dbReference type="Gene3D" id="3.40.440.10">
    <property type="entry name" value="Adenylosuccinate Synthetase, subunit A, domain 1"/>
    <property type="match status" value="1"/>
</dbReference>
<dbReference type="Gene3D" id="1.10.300.10">
    <property type="entry name" value="Adenylosuccinate Synthetase, subunit A, domain 2"/>
    <property type="match status" value="1"/>
</dbReference>
<dbReference type="Gene3D" id="3.90.170.10">
    <property type="entry name" value="Adenylosuccinate Synthetase, subunit A, domain 3"/>
    <property type="match status" value="1"/>
</dbReference>
<dbReference type="HAMAP" id="MF_00011">
    <property type="entry name" value="Adenylosucc_synth"/>
    <property type="match status" value="1"/>
</dbReference>
<dbReference type="InterPro" id="IPR018220">
    <property type="entry name" value="Adenylosuccin_syn_GTP-bd"/>
</dbReference>
<dbReference type="InterPro" id="IPR033128">
    <property type="entry name" value="Adenylosuccin_syn_Lys_AS"/>
</dbReference>
<dbReference type="InterPro" id="IPR042109">
    <property type="entry name" value="Adenylosuccinate_synth_dom1"/>
</dbReference>
<dbReference type="InterPro" id="IPR042110">
    <property type="entry name" value="Adenylosuccinate_synth_dom2"/>
</dbReference>
<dbReference type="InterPro" id="IPR042111">
    <property type="entry name" value="Adenylosuccinate_synth_dom3"/>
</dbReference>
<dbReference type="InterPro" id="IPR001114">
    <property type="entry name" value="Adenylosuccinate_synthetase"/>
</dbReference>
<dbReference type="InterPro" id="IPR027417">
    <property type="entry name" value="P-loop_NTPase"/>
</dbReference>
<dbReference type="NCBIfam" id="NF002223">
    <property type="entry name" value="PRK01117.1"/>
    <property type="match status" value="1"/>
</dbReference>
<dbReference type="NCBIfam" id="TIGR00184">
    <property type="entry name" value="purA"/>
    <property type="match status" value="1"/>
</dbReference>
<dbReference type="PANTHER" id="PTHR11846">
    <property type="entry name" value="ADENYLOSUCCINATE SYNTHETASE"/>
    <property type="match status" value="1"/>
</dbReference>
<dbReference type="PANTHER" id="PTHR11846:SF0">
    <property type="entry name" value="ADENYLOSUCCINATE SYNTHETASE"/>
    <property type="match status" value="1"/>
</dbReference>
<dbReference type="Pfam" id="PF00709">
    <property type="entry name" value="Adenylsucc_synt"/>
    <property type="match status" value="1"/>
</dbReference>
<dbReference type="SMART" id="SM00788">
    <property type="entry name" value="Adenylsucc_synt"/>
    <property type="match status" value="1"/>
</dbReference>
<dbReference type="SUPFAM" id="SSF52540">
    <property type="entry name" value="P-loop containing nucleoside triphosphate hydrolases"/>
    <property type="match status" value="1"/>
</dbReference>
<dbReference type="PROSITE" id="PS01266">
    <property type="entry name" value="ADENYLOSUCCIN_SYN_1"/>
    <property type="match status" value="1"/>
</dbReference>
<dbReference type="PROSITE" id="PS00513">
    <property type="entry name" value="ADENYLOSUCCIN_SYN_2"/>
    <property type="match status" value="1"/>
</dbReference>
<comment type="function">
    <text evidence="1">Plays an important role in the de novo pathway of purine nucleotide biosynthesis. Catalyzes the first committed step in the biosynthesis of AMP from IMP.</text>
</comment>
<comment type="catalytic activity">
    <reaction evidence="1">
        <text>IMP + L-aspartate + GTP = N(6)-(1,2-dicarboxyethyl)-AMP + GDP + phosphate + 2 H(+)</text>
        <dbReference type="Rhea" id="RHEA:15753"/>
        <dbReference type="ChEBI" id="CHEBI:15378"/>
        <dbReference type="ChEBI" id="CHEBI:29991"/>
        <dbReference type="ChEBI" id="CHEBI:37565"/>
        <dbReference type="ChEBI" id="CHEBI:43474"/>
        <dbReference type="ChEBI" id="CHEBI:57567"/>
        <dbReference type="ChEBI" id="CHEBI:58053"/>
        <dbReference type="ChEBI" id="CHEBI:58189"/>
        <dbReference type="EC" id="6.3.4.4"/>
    </reaction>
</comment>
<comment type="cofactor">
    <cofactor evidence="1">
        <name>Mg(2+)</name>
        <dbReference type="ChEBI" id="CHEBI:18420"/>
    </cofactor>
    <text evidence="1">Binds 1 Mg(2+) ion per subunit.</text>
</comment>
<comment type="pathway">
    <text evidence="1">Purine metabolism; AMP biosynthesis via de novo pathway; AMP from IMP: step 1/2.</text>
</comment>
<comment type="subunit">
    <text evidence="1">Homodimer.</text>
</comment>
<comment type="subcellular location">
    <subcellularLocation>
        <location evidence="1">Cytoplasm</location>
    </subcellularLocation>
</comment>
<comment type="similarity">
    <text evidence="1">Belongs to the adenylosuccinate synthetase family.</text>
</comment>
<accession>B0BQ12</accession>
<sequence length="432" mass="47457">MGKSVAILGAQWGDEGKGKIVDLLTDRVKYVVRYQGGHNAGHTLIINGEKTVLRLIPSGILRDNVTCLIGNGVVLSPEALMKEMGELEARGINVRDRLKISEACPLILPYHVAMDHAREAALGKNKIGTTGRGIGPAYEDKVARRGLRVSDLFDKEAFAEKLKDILDYYNFQLVHYYKVEPVDFQKTLDDVFAIADVIKGMVADVTTLLHQARKEGVNILFEGAQGTMLDIDHGTYPFVTSSNTTAGGVATGSGFGPRNLDYVLGIIKAYCTRVGSGPFTTELFDEVGAEIARKGNEFGAVTGRPRRCGWFDAVAVRRAVQINSISGFCMTKLDVLDGFEELKICTAYKMPNGEIVEYAPMAAKDWEGVEPIYETMPGWSENTFRVTKREELPQAALDYIKRIEELVGVPVDILSTGPDRVETMILRDPFAA</sequence>
<evidence type="ECO:0000255" key="1">
    <source>
        <dbReference type="HAMAP-Rule" id="MF_00011"/>
    </source>
</evidence>
<name>PURA_ACTPJ</name>
<organism>
    <name type="scientific">Actinobacillus pleuropneumoniae serotype 3 (strain JL03)</name>
    <dbReference type="NCBI Taxonomy" id="434271"/>
    <lineage>
        <taxon>Bacteria</taxon>
        <taxon>Pseudomonadati</taxon>
        <taxon>Pseudomonadota</taxon>
        <taxon>Gammaproteobacteria</taxon>
        <taxon>Pasteurellales</taxon>
        <taxon>Pasteurellaceae</taxon>
        <taxon>Actinobacillus</taxon>
    </lineage>
</organism>
<protein>
    <recommendedName>
        <fullName evidence="1">Adenylosuccinate synthetase</fullName>
        <shortName evidence="1">AMPSase</shortName>
        <shortName evidence="1">AdSS</shortName>
        <ecNumber evidence="1">6.3.4.4</ecNumber>
    </recommendedName>
    <alternativeName>
        <fullName evidence="1">IMP--aspartate ligase</fullName>
    </alternativeName>
</protein>
<gene>
    <name evidence="1" type="primary">purA</name>
    <name type="ordered locus">APJL_1091</name>
</gene>
<proteinExistence type="inferred from homology"/>
<feature type="chain" id="PRO_1000089265" description="Adenylosuccinate synthetase">
    <location>
        <begin position="1"/>
        <end position="432"/>
    </location>
</feature>
<feature type="active site" description="Proton acceptor" evidence="1">
    <location>
        <position position="14"/>
    </location>
</feature>
<feature type="active site" description="Proton donor" evidence="1">
    <location>
        <position position="42"/>
    </location>
</feature>
<feature type="binding site" evidence="1">
    <location>
        <begin position="13"/>
        <end position="19"/>
    </location>
    <ligand>
        <name>GTP</name>
        <dbReference type="ChEBI" id="CHEBI:37565"/>
    </ligand>
</feature>
<feature type="binding site" description="in other chain" evidence="1">
    <location>
        <begin position="14"/>
        <end position="17"/>
    </location>
    <ligand>
        <name>IMP</name>
        <dbReference type="ChEBI" id="CHEBI:58053"/>
        <note>ligand shared between dimeric partners</note>
    </ligand>
</feature>
<feature type="binding site" evidence="1">
    <location>
        <position position="14"/>
    </location>
    <ligand>
        <name>Mg(2+)</name>
        <dbReference type="ChEBI" id="CHEBI:18420"/>
    </ligand>
</feature>
<feature type="binding site" description="in other chain" evidence="1">
    <location>
        <begin position="39"/>
        <end position="42"/>
    </location>
    <ligand>
        <name>IMP</name>
        <dbReference type="ChEBI" id="CHEBI:58053"/>
        <note>ligand shared between dimeric partners</note>
    </ligand>
</feature>
<feature type="binding site" evidence="1">
    <location>
        <begin position="41"/>
        <end position="43"/>
    </location>
    <ligand>
        <name>GTP</name>
        <dbReference type="ChEBI" id="CHEBI:37565"/>
    </ligand>
</feature>
<feature type="binding site" evidence="1">
    <location>
        <position position="41"/>
    </location>
    <ligand>
        <name>Mg(2+)</name>
        <dbReference type="ChEBI" id="CHEBI:18420"/>
    </ligand>
</feature>
<feature type="binding site" description="in other chain" evidence="1">
    <location>
        <position position="130"/>
    </location>
    <ligand>
        <name>IMP</name>
        <dbReference type="ChEBI" id="CHEBI:58053"/>
        <note>ligand shared between dimeric partners</note>
    </ligand>
</feature>
<feature type="binding site" evidence="1">
    <location>
        <position position="144"/>
    </location>
    <ligand>
        <name>IMP</name>
        <dbReference type="ChEBI" id="CHEBI:58053"/>
        <note>ligand shared between dimeric partners</note>
    </ligand>
</feature>
<feature type="binding site" description="in other chain" evidence="1">
    <location>
        <position position="225"/>
    </location>
    <ligand>
        <name>IMP</name>
        <dbReference type="ChEBI" id="CHEBI:58053"/>
        <note>ligand shared between dimeric partners</note>
    </ligand>
</feature>
<feature type="binding site" description="in other chain" evidence="1">
    <location>
        <position position="240"/>
    </location>
    <ligand>
        <name>IMP</name>
        <dbReference type="ChEBI" id="CHEBI:58053"/>
        <note>ligand shared between dimeric partners</note>
    </ligand>
</feature>
<feature type="binding site" evidence="1">
    <location>
        <begin position="300"/>
        <end position="306"/>
    </location>
    <ligand>
        <name>substrate</name>
    </ligand>
</feature>
<feature type="binding site" description="in other chain" evidence="1">
    <location>
        <position position="304"/>
    </location>
    <ligand>
        <name>IMP</name>
        <dbReference type="ChEBI" id="CHEBI:58053"/>
        <note>ligand shared between dimeric partners</note>
    </ligand>
</feature>
<feature type="binding site" evidence="1">
    <location>
        <position position="306"/>
    </location>
    <ligand>
        <name>GTP</name>
        <dbReference type="ChEBI" id="CHEBI:37565"/>
    </ligand>
</feature>
<feature type="binding site" evidence="1">
    <location>
        <begin position="332"/>
        <end position="334"/>
    </location>
    <ligand>
        <name>GTP</name>
        <dbReference type="ChEBI" id="CHEBI:37565"/>
    </ligand>
</feature>
<feature type="binding site" evidence="1">
    <location>
        <begin position="415"/>
        <end position="417"/>
    </location>
    <ligand>
        <name>GTP</name>
        <dbReference type="ChEBI" id="CHEBI:37565"/>
    </ligand>
</feature>
<reference key="1">
    <citation type="journal article" date="2008" name="PLoS ONE">
        <title>Genome biology of Actinobacillus pleuropneumoniae JL03, an isolate of serotype 3 prevalent in China.</title>
        <authorList>
            <person name="Xu Z."/>
            <person name="Zhou Y."/>
            <person name="Li L."/>
            <person name="Zhou R."/>
            <person name="Xiao S."/>
            <person name="Wan Y."/>
            <person name="Zhang S."/>
            <person name="Wang K."/>
            <person name="Li W."/>
            <person name="Li L."/>
            <person name="Jin H."/>
            <person name="Kang M."/>
            <person name="Dalai B."/>
            <person name="Li T."/>
            <person name="Liu L."/>
            <person name="Cheng Y."/>
            <person name="Zhang L."/>
            <person name="Xu T."/>
            <person name="Zheng H."/>
            <person name="Pu S."/>
            <person name="Wang B."/>
            <person name="Gu W."/>
            <person name="Zhang X.L."/>
            <person name="Zhu G.-F."/>
            <person name="Wang S."/>
            <person name="Zhao G.-P."/>
            <person name="Chen H."/>
        </authorList>
    </citation>
    <scope>NUCLEOTIDE SEQUENCE [LARGE SCALE GENOMIC DNA]</scope>
    <source>
        <strain>JL03</strain>
    </source>
</reference>